<protein>
    <recommendedName>
        <fullName evidence="2">Small ribosomal subunit protein uS12</fullName>
    </recommendedName>
    <alternativeName>
        <fullName evidence="4">30S ribosomal protein S12</fullName>
    </alternativeName>
</protein>
<evidence type="ECO:0000250" key="1"/>
<evidence type="ECO:0000255" key="2">
    <source>
        <dbReference type="HAMAP-Rule" id="MF_00403"/>
    </source>
</evidence>
<evidence type="ECO:0000256" key="3">
    <source>
        <dbReference type="SAM" id="MobiDB-lite"/>
    </source>
</evidence>
<evidence type="ECO:0000305" key="4"/>
<feature type="chain" id="PRO_1000194143" description="Small ribosomal subunit protein uS12">
    <location>
        <begin position="1"/>
        <end position="128"/>
    </location>
</feature>
<feature type="region of interest" description="Disordered" evidence="3">
    <location>
        <begin position="1"/>
        <end position="25"/>
    </location>
</feature>
<feature type="region of interest" description="Disordered" evidence="3">
    <location>
        <begin position="101"/>
        <end position="128"/>
    </location>
</feature>
<feature type="modified residue" description="3-methylthioaspartic acid" evidence="1">
    <location>
        <position position="89"/>
    </location>
</feature>
<organism>
    <name type="scientific">Chlorobium phaeobacteroides (strain BS1)</name>
    <dbReference type="NCBI Taxonomy" id="331678"/>
    <lineage>
        <taxon>Bacteria</taxon>
        <taxon>Pseudomonadati</taxon>
        <taxon>Chlorobiota</taxon>
        <taxon>Chlorobiia</taxon>
        <taxon>Chlorobiales</taxon>
        <taxon>Chlorobiaceae</taxon>
        <taxon>Chlorobium/Pelodictyon group</taxon>
        <taxon>Chlorobium</taxon>
    </lineage>
</organism>
<keyword id="KW-0488">Methylation</keyword>
<keyword id="KW-0687">Ribonucleoprotein</keyword>
<keyword id="KW-0689">Ribosomal protein</keyword>
<keyword id="KW-0694">RNA-binding</keyword>
<keyword id="KW-0699">rRNA-binding</keyword>
<keyword id="KW-0820">tRNA-binding</keyword>
<dbReference type="EMBL" id="CP001101">
    <property type="protein sequence ID" value="ACE05205.1"/>
    <property type="molecule type" value="Genomic_DNA"/>
</dbReference>
<dbReference type="SMR" id="B3EP66"/>
<dbReference type="STRING" id="331678.Cphamn1_2301"/>
<dbReference type="KEGG" id="cpb:Cphamn1_2301"/>
<dbReference type="eggNOG" id="COG0048">
    <property type="taxonomic scope" value="Bacteria"/>
</dbReference>
<dbReference type="HOGENOM" id="CLU_104295_1_2_10"/>
<dbReference type="OrthoDB" id="9802366at2"/>
<dbReference type="GO" id="GO:0015935">
    <property type="term" value="C:small ribosomal subunit"/>
    <property type="evidence" value="ECO:0007669"/>
    <property type="project" value="InterPro"/>
</dbReference>
<dbReference type="GO" id="GO:0019843">
    <property type="term" value="F:rRNA binding"/>
    <property type="evidence" value="ECO:0007669"/>
    <property type="project" value="UniProtKB-UniRule"/>
</dbReference>
<dbReference type="GO" id="GO:0003735">
    <property type="term" value="F:structural constituent of ribosome"/>
    <property type="evidence" value="ECO:0007669"/>
    <property type="project" value="InterPro"/>
</dbReference>
<dbReference type="GO" id="GO:0000049">
    <property type="term" value="F:tRNA binding"/>
    <property type="evidence" value="ECO:0007669"/>
    <property type="project" value="UniProtKB-UniRule"/>
</dbReference>
<dbReference type="GO" id="GO:0006412">
    <property type="term" value="P:translation"/>
    <property type="evidence" value="ECO:0007669"/>
    <property type="project" value="UniProtKB-UniRule"/>
</dbReference>
<dbReference type="CDD" id="cd03368">
    <property type="entry name" value="Ribosomal_S12"/>
    <property type="match status" value="1"/>
</dbReference>
<dbReference type="FunFam" id="2.40.50.140:FF:000001">
    <property type="entry name" value="30S ribosomal protein S12"/>
    <property type="match status" value="1"/>
</dbReference>
<dbReference type="Gene3D" id="2.40.50.140">
    <property type="entry name" value="Nucleic acid-binding proteins"/>
    <property type="match status" value="1"/>
</dbReference>
<dbReference type="HAMAP" id="MF_00403_B">
    <property type="entry name" value="Ribosomal_uS12_B"/>
    <property type="match status" value="1"/>
</dbReference>
<dbReference type="InterPro" id="IPR012340">
    <property type="entry name" value="NA-bd_OB-fold"/>
</dbReference>
<dbReference type="InterPro" id="IPR006032">
    <property type="entry name" value="Ribosomal_uS12"/>
</dbReference>
<dbReference type="InterPro" id="IPR005679">
    <property type="entry name" value="Ribosomal_uS12_bac"/>
</dbReference>
<dbReference type="NCBIfam" id="TIGR00981">
    <property type="entry name" value="rpsL_bact"/>
    <property type="match status" value="1"/>
</dbReference>
<dbReference type="PANTHER" id="PTHR11652">
    <property type="entry name" value="30S RIBOSOMAL PROTEIN S12 FAMILY MEMBER"/>
    <property type="match status" value="1"/>
</dbReference>
<dbReference type="Pfam" id="PF00164">
    <property type="entry name" value="Ribosom_S12_S23"/>
    <property type="match status" value="1"/>
</dbReference>
<dbReference type="PIRSF" id="PIRSF002133">
    <property type="entry name" value="Ribosomal_S12/S23"/>
    <property type="match status" value="1"/>
</dbReference>
<dbReference type="PRINTS" id="PR01034">
    <property type="entry name" value="RIBOSOMALS12"/>
</dbReference>
<dbReference type="SUPFAM" id="SSF50249">
    <property type="entry name" value="Nucleic acid-binding proteins"/>
    <property type="match status" value="1"/>
</dbReference>
<dbReference type="PROSITE" id="PS00055">
    <property type="entry name" value="RIBOSOMAL_S12"/>
    <property type="match status" value="1"/>
</dbReference>
<reference key="1">
    <citation type="submission" date="2008-06" db="EMBL/GenBank/DDBJ databases">
        <title>Complete sequence of Chlorobium phaeobacteroides BS1.</title>
        <authorList>
            <consortium name="US DOE Joint Genome Institute"/>
            <person name="Lucas S."/>
            <person name="Copeland A."/>
            <person name="Lapidus A."/>
            <person name="Glavina del Rio T."/>
            <person name="Dalin E."/>
            <person name="Tice H."/>
            <person name="Bruce D."/>
            <person name="Goodwin L."/>
            <person name="Pitluck S."/>
            <person name="Schmutz J."/>
            <person name="Larimer F."/>
            <person name="Land M."/>
            <person name="Hauser L."/>
            <person name="Kyrpides N."/>
            <person name="Ovchinnikova G."/>
            <person name="Li T."/>
            <person name="Liu Z."/>
            <person name="Zhao F."/>
            <person name="Overmann J."/>
            <person name="Bryant D.A."/>
            <person name="Richardson P."/>
        </authorList>
    </citation>
    <scope>NUCLEOTIDE SEQUENCE [LARGE SCALE GENOMIC DNA]</scope>
    <source>
        <strain>BS1</strain>
    </source>
</reference>
<proteinExistence type="inferred from homology"/>
<name>RS12_CHLPB</name>
<gene>
    <name evidence="2" type="primary">rpsL</name>
    <name type="ordered locus">Cphamn1_2301</name>
</gene>
<accession>B3EP66</accession>
<comment type="function">
    <text evidence="2">With S4 and S5 plays an important role in translational accuracy.</text>
</comment>
<comment type="function">
    <text evidence="2">Interacts with and stabilizes bases of the 16S rRNA that are involved in tRNA selection in the A site and with the mRNA backbone. Located at the interface of the 30S and 50S subunits, it traverses the body of the 30S subunit contacting proteins on the other side and probably holding the rRNA structure together. The combined cluster of proteins S8, S12 and S17 appears to hold together the shoulder and platform of the 30S subunit.</text>
</comment>
<comment type="subunit">
    <text evidence="2">Part of the 30S ribosomal subunit. Contacts proteins S8 and S17. May interact with IF1 in the 30S initiation complex.</text>
</comment>
<comment type="similarity">
    <text evidence="2">Belongs to the universal ribosomal protein uS12 family.</text>
</comment>
<sequence>MPTIQQLIRRGRKTKASKTASPALERCPQKRGVCTRVYTTTPKKPNSALRKVARVRLSNKIEVTAYIPGEGHNLQEHSIVLIRGGRVKDLPGVRYHIVRGSLDTSGVADRRNSRSKYGAKRPKEAAAK</sequence>